<feature type="chain" id="PRO_0000458082" description="Trimethylamine N-oxide transport system ATP-binding protein TmoW">
    <location>
        <begin position="1"/>
        <end position="341"/>
    </location>
</feature>
<feature type="domain" description="ABC transporter" evidence="1">
    <location>
        <begin position="6"/>
        <end position="265"/>
    </location>
</feature>
<feature type="binding site" evidence="1">
    <location>
        <begin position="61"/>
        <end position="68"/>
    </location>
    <ligand>
        <name>ATP</name>
        <dbReference type="ChEBI" id="CHEBI:30616"/>
    </ligand>
</feature>
<keyword id="KW-0067">ATP-binding</keyword>
<keyword id="KW-0997">Cell inner membrane</keyword>
<keyword id="KW-1003">Cell membrane</keyword>
<keyword id="KW-0472">Membrane</keyword>
<keyword id="KW-0547">Nucleotide-binding</keyword>
<keyword id="KW-1185">Reference proteome</keyword>
<keyword id="KW-1278">Translocase</keyword>
<keyword id="KW-0813">Transport</keyword>
<name>TMOW_PELUB</name>
<comment type="function">
    <text evidence="2 4">Part of the ABC transporter complex TmoXWV involved in trimethylamine N-oxide (TMAO) import (PubMed:35295296). Responsible for energy coupling to the transport system (Probable).</text>
</comment>
<comment type="catalytic activity">
    <reaction evidence="5">
        <text>a quaternary ammonium(out) + ATP + H2O = a quaternary ammonium(in) + ADP + phosphate + H(+)</text>
        <dbReference type="Rhea" id="RHEA:11036"/>
        <dbReference type="ChEBI" id="CHEBI:15377"/>
        <dbReference type="ChEBI" id="CHEBI:15378"/>
        <dbReference type="ChEBI" id="CHEBI:30616"/>
        <dbReference type="ChEBI" id="CHEBI:35267"/>
        <dbReference type="ChEBI" id="CHEBI:43474"/>
        <dbReference type="ChEBI" id="CHEBI:456216"/>
        <dbReference type="EC" id="7.6.2.9"/>
    </reaction>
    <physiologicalReaction direction="left-to-right" evidence="5">
        <dbReference type="Rhea" id="RHEA:11037"/>
    </physiologicalReaction>
</comment>
<comment type="subunit">
    <text evidence="5">The complex is probably composed of two ATP-binding proteins (TmoW), two transmembrane proteins (TmoV) and a solute-binding protein (TmoX).</text>
</comment>
<comment type="subcellular location">
    <subcellularLocation>
        <location evidence="4">Cell inner membrane</location>
        <topology evidence="4">Peripheral membrane protein</topology>
    </subcellularLocation>
</comment>
<comment type="similarity">
    <text evidence="4">Belongs to the ABC transporter superfamily.</text>
</comment>
<organism>
    <name type="scientific">Pelagibacter ubique (strain HTCC1062)</name>
    <dbReference type="NCBI Taxonomy" id="335992"/>
    <lineage>
        <taxon>Bacteria</taxon>
        <taxon>Pseudomonadati</taxon>
        <taxon>Pseudomonadota</taxon>
        <taxon>Alphaproteobacteria</taxon>
        <taxon>Candidatus Pelagibacterales</taxon>
        <taxon>Candidatus Pelagibacteraceae</taxon>
        <taxon>Candidatus Pelagibacter</taxon>
    </lineage>
</organism>
<gene>
    <name evidence="3" type="primary">tmoW</name>
    <name evidence="6" type="ordered locus">SAR11_1298</name>
</gene>
<dbReference type="EC" id="7.6.2.9" evidence="5"/>
<dbReference type="EMBL" id="CP000084">
    <property type="protein sequence ID" value="AAZ22101.1"/>
    <property type="molecule type" value="Genomic_DNA"/>
</dbReference>
<dbReference type="RefSeq" id="WP_006997990.1">
    <property type="nucleotide sequence ID" value="NC_007205.1"/>
</dbReference>
<dbReference type="SMR" id="Q4FL37"/>
<dbReference type="STRING" id="335992.SAR11_1298"/>
<dbReference type="GeneID" id="66295788"/>
<dbReference type="KEGG" id="pub:SAR11_1298"/>
<dbReference type="eggNOG" id="COG4175">
    <property type="taxonomic scope" value="Bacteria"/>
</dbReference>
<dbReference type="HOGENOM" id="CLU_000604_2_2_5"/>
<dbReference type="OrthoDB" id="9802264at2"/>
<dbReference type="Proteomes" id="UP000002528">
    <property type="component" value="Chromosome"/>
</dbReference>
<dbReference type="GO" id="GO:0005886">
    <property type="term" value="C:plasma membrane"/>
    <property type="evidence" value="ECO:0007669"/>
    <property type="project" value="UniProtKB-SubCell"/>
</dbReference>
<dbReference type="GO" id="GO:0005524">
    <property type="term" value="F:ATP binding"/>
    <property type="evidence" value="ECO:0007669"/>
    <property type="project" value="UniProtKB-KW"/>
</dbReference>
<dbReference type="GO" id="GO:0016887">
    <property type="term" value="F:ATP hydrolysis activity"/>
    <property type="evidence" value="ECO:0007669"/>
    <property type="project" value="InterPro"/>
</dbReference>
<dbReference type="GO" id="GO:0031460">
    <property type="term" value="P:glycine betaine transport"/>
    <property type="evidence" value="ECO:0007669"/>
    <property type="project" value="InterPro"/>
</dbReference>
<dbReference type="CDD" id="cd03294">
    <property type="entry name" value="ABC_Pro_Gly_Betaine"/>
    <property type="match status" value="1"/>
</dbReference>
<dbReference type="FunFam" id="3.40.50.300:FF:000201">
    <property type="entry name" value="Glycine betaine/L-proline ABC transporter ATP-binding protein"/>
    <property type="match status" value="1"/>
</dbReference>
<dbReference type="Gene3D" id="3.40.50.300">
    <property type="entry name" value="P-loop containing nucleotide triphosphate hydrolases"/>
    <property type="match status" value="1"/>
</dbReference>
<dbReference type="InterPro" id="IPR003593">
    <property type="entry name" value="AAA+_ATPase"/>
</dbReference>
<dbReference type="InterPro" id="IPR051921">
    <property type="entry name" value="ABC_osmolyte_uptake_ATP-bind"/>
</dbReference>
<dbReference type="InterPro" id="IPR003439">
    <property type="entry name" value="ABC_transporter-like_ATP-bd"/>
</dbReference>
<dbReference type="InterPro" id="IPR017871">
    <property type="entry name" value="ABC_transporter-like_CS"/>
</dbReference>
<dbReference type="InterPro" id="IPR005892">
    <property type="entry name" value="Gly-betaine_transp_ATP-bd"/>
</dbReference>
<dbReference type="InterPro" id="IPR027417">
    <property type="entry name" value="P-loop_NTPase"/>
</dbReference>
<dbReference type="NCBIfam" id="TIGR01186">
    <property type="entry name" value="proV"/>
    <property type="match status" value="1"/>
</dbReference>
<dbReference type="PANTHER" id="PTHR43869">
    <property type="entry name" value="GLYCINE BETAINE/PROLINE BETAINE TRANSPORT SYSTEM ATP-BINDING PROTEIN PROV"/>
    <property type="match status" value="1"/>
</dbReference>
<dbReference type="PANTHER" id="PTHR43869:SF1">
    <property type="entry name" value="GLYCINE BETAINE_PROLINE BETAINE TRANSPORT SYSTEM ATP-BINDING PROTEIN PROV"/>
    <property type="match status" value="1"/>
</dbReference>
<dbReference type="Pfam" id="PF00005">
    <property type="entry name" value="ABC_tran"/>
    <property type="match status" value="1"/>
</dbReference>
<dbReference type="SMART" id="SM00382">
    <property type="entry name" value="AAA"/>
    <property type="match status" value="1"/>
</dbReference>
<dbReference type="SUPFAM" id="SSF52540">
    <property type="entry name" value="P-loop containing nucleoside triphosphate hydrolases"/>
    <property type="match status" value="1"/>
</dbReference>
<dbReference type="PROSITE" id="PS00211">
    <property type="entry name" value="ABC_TRANSPORTER_1"/>
    <property type="match status" value="1"/>
</dbReference>
<dbReference type="PROSITE" id="PS50893">
    <property type="entry name" value="ABC_TRANSPORTER_2"/>
    <property type="match status" value="1"/>
</dbReference>
<proteinExistence type="evidence at protein level"/>
<sequence length="341" mass="38298">MSDPVIKCESVYKIFGSNAKKMLHEANGNVDAKTFQDNGCIVGVNNASFEVVKGEMLVVMGLSGSGKSTLLRCISRLTDATSGKIYIDGQDLLTLNNKELIELRRNKMGMVFQSFALLPHKTVVENIAFPLQIKGIKTQDSINKAMEMVKLVGLDGRENYFPRELSGGQQQRVGIARSLAVEPDIWFLDEPFSALDPLIRKEMQDEFLRLQEKLQKTIMFITHDFDEALRLADRIAIMKDGVIEQLDTPANIVLNPATEYVRKFTEEVPRGKVLKIADLMEKPETENLSDFKVSKNEIIENVAEKILTQEKSVAVTDENNKIVGSVHPSKIIHTVFSREKK</sequence>
<reference key="1">
    <citation type="journal article" date="2005" name="Science">
        <title>Genome streamlining in a cosmopolitan oceanic bacterium.</title>
        <authorList>
            <person name="Giovannoni S.J."/>
            <person name="Tripp H.J."/>
            <person name="Givan S."/>
            <person name="Podar M."/>
            <person name="Vergin K.L."/>
            <person name="Baptista D."/>
            <person name="Bibbs L."/>
            <person name="Eads J."/>
            <person name="Richardson T.H."/>
            <person name="Noordewier M."/>
            <person name="Rappe M.S."/>
            <person name="Short J.M."/>
            <person name="Carrington J.C."/>
            <person name="Mathur E.J."/>
        </authorList>
    </citation>
    <scope>NUCLEOTIDE SEQUENCE [LARGE SCALE GENOMIC DNA]</scope>
    <source>
        <strain>HTCC1062</strain>
    </source>
</reference>
<reference key="2">
    <citation type="journal article" date="2022" name="Front. Microbiol.">
        <title>Characterization of the trimethylamine N-oxide transporter from Pelagibacter strain HTCC1062 reveals its oligotrophic niche adaption.</title>
        <authorList>
            <person name="Gao C."/>
            <person name="Zhang N."/>
            <person name="He X.Y."/>
            <person name="Wang N."/>
            <person name="Zhang X.Y."/>
            <person name="Wang P."/>
            <person name="Chen X.L."/>
            <person name="Zhang Y.Z."/>
            <person name="Ding J.M."/>
            <person name="Li C.Y."/>
        </authorList>
    </citation>
    <scope>FUNCTION IN TMAO TRANSPORT</scope>
    <source>
        <strain>HTCC1062</strain>
    </source>
</reference>
<evidence type="ECO:0000255" key="1">
    <source>
        <dbReference type="PROSITE-ProRule" id="PRU00434"/>
    </source>
</evidence>
<evidence type="ECO:0000269" key="2">
    <source>
    </source>
</evidence>
<evidence type="ECO:0000303" key="3">
    <source>
    </source>
</evidence>
<evidence type="ECO:0000305" key="4"/>
<evidence type="ECO:0000305" key="5">
    <source>
    </source>
</evidence>
<evidence type="ECO:0000312" key="6">
    <source>
        <dbReference type="EMBL" id="AAZ22101.1"/>
    </source>
</evidence>
<protein>
    <recommendedName>
        <fullName evidence="4">Trimethylamine N-oxide transport system ATP-binding protein TmoW</fullName>
        <shortName evidence="4">TMAO transport system ATP-binding protein TmoW</shortName>
        <ecNumber evidence="5">7.6.2.9</ecNumber>
    </recommendedName>
</protein>
<accession>Q4FL37</accession>